<keyword id="KW-0496">Mitochondrion</keyword>
<keyword id="KW-1185">Reference proteome</keyword>
<keyword id="KW-0677">Repeat</keyword>
<keyword id="KW-0809">Transit peptide</keyword>
<feature type="transit peptide" description="Mitochondrion" evidence="1">
    <location>
        <begin position="1"/>
        <end position="117"/>
    </location>
</feature>
<feature type="chain" id="PRO_0000342801" description="Pentatricopeptide repeat-containing protein At1g26900, mitochondrial">
    <location>
        <begin position="118"/>
        <end position="572"/>
    </location>
</feature>
<feature type="repeat" description="PPR 1">
    <location>
        <begin position="89"/>
        <end position="123"/>
    </location>
</feature>
<feature type="repeat" description="PPR 2">
    <location>
        <begin position="124"/>
        <end position="158"/>
    </location>
</feature>
<feature type="repeat" description="PPR 3">
    <location>
        <begin position="159"/>
        <end position="189"/>
    </location>
</feature>
<feature type="repeat" description="PPR 4">
    <location>
        <begin position="191"/>
        <end position="225"/>
    </location>
</feature>
<feature type="repeat" description="PPR 5">
    <location>
        <begin position="226"/>
        <end position="260"/>
    </location>
</feature>
<feature type="repeat" description="PPR 6">
    <location>
        <begin position="261"/>
        <end position="291"/>
    </location>
</feature>
<feature type="repeat" description="PPR 7">
    <location>
        <begin position="292"/>
        <end position="326"/>
    </location>
</feature>
<feature type="repeat" description="PPR 8">
    <location>
        <begin position="327"/>
        <end position="361"/>
    </location>
</feature>
<feature type="repeat" description="PPR 9">
    <location>
        <begin position="362"/>
        <end position="392"/>
    </location>
</feature>
<feature type="repeat" description="PPR 10">
    <location>
        <begin position="393"/>
        <end position="427"/>
    </location>
</feature>
<feature type="repeat" description="PPR 11">
    <location>
        <begin position="430"/>
        <end position="460"/>
    </location>
</feature>
<feature type="repeat" description="PPR 12">
    <location>
        <begin position="466"/>
        <end position="496"/>
    </location>
</feature>
<feature type="region of interest" description="Type E motif">
    <location>
        <begin position="501"/>
        <end position="572"/>
    </location>
</feature>
<organism>
    <name type="scientific">Arabidopsis thaliana</name>
    <name type="common">Mouse-ear cress</name>
    <dbReference type="NCBI Taxonomy" id="3702"/>
    <lineage>
        <taxon>Eukaryota</taxon>
        <taxon>Viridiplantae</taxon>
        <taxon>Streptophyta</taxon>
        <taxon>Embryophyta</taxon>
        <taxon>Tracheophyta</taxon>
        <taxon>Spermatophyta</taxon>
        <taxon>Magnoliopsida</taxon>
        <taxon>eudicotyledons</taxon>
        <taxon>Gunneridae</taxon>
        <taxon>Pentapetalae</taxon>
        <taxon>rosids</taxon>
        <taxon>malvids</taxon>
        <taxon>Brassicales</taxon>
        <taxon>Brassicaceae</taxon>
        <taxon>Camelineae</taxon>
        <taxon>Arabidopsis</taxon>
    </lineage>
</organism>
<comment type="subcellular location">
    <subcellularLocation>
        <location evidence="2">Mitochondrion</location>
    </subcellularLocation>
</comment>
<comment type="similarity">
    <text evidence="2">Belongs to the PPR family. PCMP-E subfamily.</text>
</comment>
<comment type="online information" name="Pentatricopeptide repeat proteins">
    <link uri="https://ppr.plantenergy.uwa.edu.au"/>
</comment>
<protein>
    <recommendedName>
        <fullName>Pentatricopeptide repeat-containing protein At1g26900, mitochondrial</fullName>
    </recommendedName>
</protein>
<name>PPR60_ARATH</name>
<accession>Q9ZVG8</accession>
<sequence length="572" mass="63587">MTLAITSRLRRNFVFRRRNLESLLSPQCQKLINDLRSCRDTVEVSRIHGYMVKTGLDKDDFAVSKLLAFSSVLDIRYASSIFEHVSNTNLFMFNTMIRGYSISDEPERAFSVFNQLRAKGLTLDRFSFITTLKSCSRELCVSIGEGLHGIALRSGFMVFTDLRNALIHFYCVCGKISDARKVFDEMPQSVDAVTFSTLMNGYLQVSKKALALDLFRIMRKSEVVVNVSTLLSFLSAISDLGDLSGAESAHVLCIKIGLDLDLHLITALIGMYGKTGGISSARRIFDCAIRKDVVTWNCMIDQYAKTGLLEECVWLLRQMKYEKMKPNSSTFVGLLSSCAYSEAAFVGRTVADLLEEERIALDAILGTALVDMYAKVGLLEKAVEIFNRMKDKDVKSWTAMISGYGAHGLAREAVTLFNKMEEENCKVRPNEITFLVVLNACSHGGLVMEGIRCFKRMVEAYSFTPKVEHYGCVVDLLGRAGQLEEAYELIRNLPITSDSTAWRALLAACRVYGNADLGESVMMRLAEMGETHPADAILLAGTHAVAGNPEKSLDNELNKGRKEAGYSAIEIE</sequence>
<reference key="1">
    <citation type="journal article" date="2000" name="Nature">
        <title>Sequence and analysis of chromosome 1 of the plant Arabidopsis thaliana.</title>
        <authorList>
            <person name="Theologis A."/>
            <person name="Ecker J.R."/>
            <person name="Palm C.J."/>
            <person name="Federspiel N.A."/>
            <person name="Kaul S."/>
            <person name="White O."/>
            <person name="Alonso J."/>
            <person name="Altafi H."/>
            <person name="Araujo R."/>
            <person name="Bowman C.L."/>
            <person name="Brooks S.Y."/>
            <person name="Buehler E."/>
            <person name="Chan A."/>
            <person name="Chao Q."/>
            <person name="Chen H."/>
            <person name="Cheuk R.F."/>
            <person name="Chin C.W."/>
            <person name="Chung M.K."/>
            <person name="Conn L."/>
            <person name="Conway A.B."/>
            <person name="Conway A.R."/>
            <person name="Creasy T.H."/>
            <person name="Dewar K."/>
            <person name="Dunn P."/>
            <person name="Etgu P."/>
            <person name="Feldblyum T.V."/>
            <person name="Feng J.-D."/>
            <person name="Fong B."/>
            <person name="Fujii C.Y."/>
            <person name="Gill J.E."/>
            <person name="Goldsmith A.D."/>
            <person name="Haas B."/>
            <person name="Hansen N.F."/>
            <person name="Hughes B."/>
            <person name="Huizar L."/>
            <person name="Hunter J.L."/>
            <person name="Jenkins J."/>
            <person name="Johnson-Hopson C."/>
            <person name="Khan S."/>
            <person name="Khaykin E."/>
            <person name="Kim C.J."/>
            <person name="Koo H.L."/>
            <person name="Kremenetskaia I."/>
            <person name="Kurtz D.B."/>
            <person name="Kwan A."/>
            <person name="Lam B."/>
            <person name="Langin-Hooper S."/>
            <person name="Lee A."/>
            <person name="Lee J.M."/>
            <person name="Lenz C.A."/>
            <person name="Li J.H."/>
            <person name="Li Y.-P."/>
            <person name="Lin X."/>
            <person name="Liu S.X."/>
            <person name="Liu Z.A."/>
            <person name="Luros J.S."/>
            <person name="Maiti R."/>
            <person name="Marziali A."/>
            <person name="Militscher J."/>
            <person name="Miranda M."/>
            <person name="Nguyen M."/>
            <person name="Nierman W.C."/>
            <person name="Osborne B.I."/>
            <person name="Pai G."/>
            <person name="Peterson J."/>
            <person name="Pham P.K."/>
            <person name="Rizzo M."/>
            <person name="Rooney T."/>
            <person name="Rowley D."/>
            <person name="Sakano H."/>
            <person name="Salzberg S.L."/>
            <person name="Schwartz J.R."/>
            <person name="Shinn P."/>
            <person name="Southwick A.M."/>
            <person name="Sun H."/>
            <person name="Tallon L.J."/>
            <person name="Tambunga G."/>
            <person name="Toriumi M.J."/>
            <person name="Town C.D."/>
            <person name="Utterback T."/>
            <person name="Van Aken S."/>
            <person name="Vaysberg M."/>
            <person name="Vysotskaia V.S."/>
            <person name="Walker M."/>
            <person name="Wu D."/>
            <person name="Yu G."/>
            <person name="Fraser C.M."/>
            <person name="Venter J.C."/>
            <person name="Davis R.W."/>
        </authorList>
    </citation>
    <scope>NUCLEOTIDE SEQUENCE [LARGE SCALE GENOMIC DNA]</scope>
    <source>
        <strain>cv. Columbia</strain>
    </source>
</reference>
<reference key="2">
    <citation type="journal article" date="2017" name="Plant J.">
        <title>Araport11: a complete reannotation of the Arabidopsis thaliana reference genome.</title>
        <authorList>
            <person name="Cheng C.Y."/>
            <person name="Krishnakumar V."/>
            <person name="Chan A.P."/>
            <person name="Thibaud-Nissen F."/>
            <person name="Schobel S."/>
            <person name="Town C.D."/>
        </authorList>
    </citation>
    <scope>GENOME REANNOTATION</scope>
    <source>
        <strain>cv. Columbia</strain>
    </source>
</reference>
<reference key="3">
    <citation type="journal article" date="2000" name="Plant Mol. Biol.">
        <title>In Arabidopsis thaliana, 1% of the genome codes for a novel protein family unique to plants.</title>
        <authorList>
            <person name="Aubourg S."/>
            <person name="Boudet N."/>
            <person name="Kreis M."/>
            <person name="Lecharny A."/>
        </authorList>
    </citation>
    <scope>GENE FAMILY</scope>
</reference>
<reference key="4">
    <citation type="journal article" date="2004" name="Plant Cell">
        <title>Genome-wide analysis of Arabidopsis pentatricopeptide repeat proteins reveals their essential role in organelle biogenesis.</title>
        <authorList>
            <person name="Lurin C."/>
            <person name="Andres C."/>
            <person name="Aubourg S."/>
            <person name="Bellaoui M."/>
            <person name="Bitton F."/>
            <person name="Bruyere C."/>
            <person name="Caboche M."/>
            <person name="Debast C."/>
            <person name="Gualberto J."/>
            <person name="Hoffmann B."/>
            <person name="Lecharny A."/>
            <person name="Le Ret M."/>
            <person name="Martin-Magniette M.-L."/>
            <person name="Mireau H."/>
            <person name="Peeters N."/>
            <person name="Renou J.-P."/>
            <person name="Szurek B."/>
            <person name="Taconnat L."/>
            <person name="Small I."/>
        </authorList>
    </citation>
    <scope>GENE FAMILY</scope>
</reference>
<proteinExistence type="evidence at transcript level"/>
<gene>
    <name type="primary">PCMP-E54</name>
    <name type="ordered locus">At1g26900</name>
    <name type="ORF">T2P11.9</name>
</gene>
<dbReference type="EMBL" id="AC005508">
    <property type="protein sequence ID" value="AAD14496.1"/>
    <property type="molecule type" value="Genomic_DNA"/>
</dbReference>
<dbReference type="EMBL" id="CP002684">
    <property type="protein sequence ID" value="AEE30756.1"/>
    <property type="molecule type" value="Genomic_DNA"/>
</dbReference>
<dbReference type="PIR" id="H86395">
    <property type="entry name" value="H86395"/>
</dbReference>
<dbReference type="RefSeq" id="NP_174012.1">
    <property type="nucleotide sequence ID" value="NM_102454.2"/>
</dbReference>
<dbReference type="SMR" id="Q9ZVG8"/>
<dbReference type="FunCoup" id="Q9ZVG8">
    <property type="interactions" value="568"/>
</dbReference>
<dbReference type="iPTMnet" id="Q9ZVG8"/>
<dbReference type="PaxDb" id="3702-AT1G26900.1"/>
<dbReference type="ProteomicsDB" id="236583"/>
<dbReference type="EnsemblPlants" id="AT1G26900.1">
    <property type="protein sequence ID" value="AT1G26900.1"/>
    <property type="gene ID" value="AT1G26900"/>
</dbReference>
<dbReference type="GeneID" id="838376"/>
<dbReference type="Gramene" id="AT1G26900.1">
    <property type="protein sequence ID" value="AT1G26900.1"/>
    <property type="gene ID" value="AT1G26900"/>
</dbReference>
<dbReference type="KEGG" id="ath:AT1G26900"/>
<dbReference type="Araport" id="AT1G26900"/>
<dbReference type="TAIR" id="AT1G26900"/>
<dbReference type="eggNOG" id="KOG4197">
    <property type="taxonomic scope" value="Eukaryota"/>
</dbReference>
<dbReference type="HOGENOM" id="CLU_002706_0_6_1"/>
<dbReference type="InParanoid" id="Q9ZVG8"/>
<dbReference type="OMA" id="EGMADAR"/>
<dbReference type="PhylomeDB" id="Q9ZVG8"/>
<dbReference type="PRO" id="PR:Q9ZVG8"/>
<dbReference type="Proteomes" id="UP000006548">
    <property type="component" value="Chromosome 1"/>
</dbReference>
<dbReference type="ExpressionAtlas" id="Q9ZVG8">
    <property type="expression patterns" value="baseline and differential"/>
</dbReference>
<dbReference type="GO" id="GO:0005739">
    <property type="term" value="C:mitochondrion"/>
    <property type="evidence" value="ECO:0007669"/>
    <property type="project" value="UniProtKB-SubCell"/>
</dbReference>
<dbReference type="GO" id="GO:0003723">
    <property type="term" value="F:RNA binding"/>
    <property type="evidence" value="ECO:0007669"/>
    <property type="project" value="InterPro"/>
</dbReference>
<dbReference type="GO" id="GO:0009451">
    <property type="term" value="P:RNA modification"/>
    <property type="evidence" value="ECO:0007669"/>
    <property type="project" value="InterPro"/>
</dbReference>
<dbReference type="FunFam" id="1.25.40.10:FF:001227">
    <property type="entry name" value="Pentatricopeptide repeat-containing protein At1g26900, mitochondrial"/>
    <property type="match status" value="1"/>
</dbReference>
<dbReference type="FunFam" id="1.25.40.10:FF:003311">
    <property type="entry name" value="Pentatricopeptide repeat-containing protein At1g26900, mitochondrial"/>
    <property type="match status" value="1"/>
</dbReference>
<dbReference type="FunFam" id="1.25.40.10:FF:000196">
    <property type="entry name" value="Pentatricopeptide repeat-containing protein At4g14850"/>
    <property type="match status" value="1"/>
</dbReference>
<dbReference type="FunFam" id="1.25.40.10:FF:000607">
    <property type="entry name" value="Pentatricopeptide repeat-containing protein, mitochondrial"/>
    <property type="match status" value="1"/>
</dbReference>
<dbReference type="FunFam" id="1.25.40.10:FF:001698">
    <property type="entry name" value="Pentatricopeptide repeat-containing protein, mitochondrial"/>
    <property type="match status" value="1"/>
</dbReference>
<dbReference type="Gene3D" id="1.25.40.10">
    <property type="entry name" value="Tetratricopeptide repeat domain"/>
    <property type="match status" value="5"/>
</dbReference>
<dbReference type="InterPro" id="IPR002885">
    <property type="entry name" value="Pentatricopeptide_rpt"/>
</dbReference>
<dbReference type="InterPro" id="IPR046960">
    <property type="entry name" value="PPR_At4g14850-like_plant"/>
</dbReference>
<dbReference type="InterPro" id="IPR011990">
    <property type="entry name" value="TPR-like_helical_dom_sf"/>
</dbReference>
<dbReference type="NCBIfam" id="TIGR00756">
    <property type="entry name" value="PPR"/>
    <property type="match status" value="6"/>
</dbReference>
<dbReference type="PANTHER" id="PTHR47926">
    <property type="entry name" value="PENTATRICOPEPTIDE REPEAT-CONTAINING PROTEIN"/>
    <property type="match status" value="1"/>
</dbReference>
<dbReference type="PANTHER" id="PTHR47926:SF490">
    <property type="entry name" value="REPEAT-LIKE SUPERFAMILY PROTEIN, PUTATIVE-RELATED"/>
    <property type="match status" value="1"/>
</dbReference>
<dbReference type="Pfam" id="PF01535">
    <property type="entry name" value="PPR"/>
    <property type="match status" value="4"/>
</dbReference>
<dbReference type="Pfam" id="PF13041">
    <property type="entry name" value="PPR_2"/>
    <property type="match status" value="2"/>
</dbReference>
<dbReference type="PROSITE" id="PS51375">
    <property type="entry name" value="PPR"/>
    <property type="match status" value="11"/>
</dbReference>
<evidence type="ECO:0000255" key="1"/>
<evidence type="ECO:0000305" key="2"/>